<name>LSPA_SHEWM</name>
<accession>B1KIT6</accession>
<dbReference type="EC" id="3.4.23.36" evidence="1"/>
<dbReference type="EMBL" id="CP000961">
    <property type="protein sequence ID" value="ACA85584.1"/>
    <property type="molecule type" value="Genomic_DNA"/>
</dbReference>
<dbReference type="RefSeq" id="WP_012323930.1">
    <property type="nucleotide sequence ID" value="NC_010506.1"/>
</dbReference>
<dbReference type="SMR" id="B1KIT6"/>
<dbReference type="STRING" id="392500.Swoo_1292"/>
<dbReference type="MEROPS" id="A08.001"/>
<dbReference type="KEGG" id="swd:Swoo_1292"/>
<dbReference type="eggNOG" id="COG0597">
    <property type="taxonomic scope" value="Bacteria"/>
</dbReference>
<dbReference type="HOGENOM" id="CLU_083252_4_0_6"/>
<dbReference type="UniPathway" id="UPA00665"/>
<dbReference type="Proteomes" id="UP000002168">
    <property type="component" value="Chromosome"/>
</dbReference>
<dbReference type="GO" id="GO:0005886">
    <property type="term" value="C:plasma membrane"/>
    <property type="evidence" value="ECO:0007669"/>
    <property type="project" value="UniProtKB-SubCell"/>
</dbReference>
<dbReference type="GO" id="GO:0004190">
    <property type="term" value="F:aspartic-type endopeptidase activity"/>
    <property type="evidence" value="ECO:0007669"/>
    <property type="project" value="UniProtKB-UniRule"/>
</dbReference>
<dbReference type="GO" id="GO:0006508">
    <property type="term" value="P:proteolysis"/>
    <property type="evidence" value="ECO:0007669"/>
    <property type="project" value="UniProtKB-KW"/>
</dbReference>
<dbReference type="HAMAP" id="MF_00161">
    <property type="entry name" value="LspA"/>
    <property type="match status" value="1"/>
</dbReference>
<dbReference type="InterPro" id="IPR001872">
    <property type="entry name" value="Peptidase_A8"/>
</dbReference>
<dbReference type="NCBIfam" id="TIGR00077">
    <property type="entry name" value="lspA"/>
    <property type="match status" value="1"/>
</dbReference>
<dbReference type="PANTHER" id="PTHR33695">
    <property type="entry name" value="LIPOPROTEIN SIGNAL PEPTIDASE"/>
    <property type="match status" value="1"/>
</dbReference>
<dbReference type="PANTHER" id="PTHR33695:SF1">
    <property type="entry name" value="LIPOPROTEIN SIGNAL PEPTIDASE"/>
    <property type="match status" value="1"/>
</dbReference>
<dbReference type="Pfam" id="PF01252">
    <property type="entry name" value="Peptidase_A8"/>
    <property type="match status" value="1"/>
</dbReference>
<dbReference type="PRINTS" id="PR00781">
    <property type="entry name" value="LIPOSIGPTASE"/>
</dbReference>
<dbReference type="PROSITE" id="PS00855">
    <property type="entry name" value="SPASE_II"/>
    <property type="match status" value="1"/>
</dbReference>
<sequence>MPTNWKDSGLRWYWMVVLVFIADQLSKQWVLANFELRESVELLPFFNFTYLRNYGAAFSFLSDAGGWQRWFFTFVAVGFSTLLTIWLRKQPRQMWRLNLAYTLVIGGALGNLIDRLQHGYVVDFLHFYWNTSHFPAFNIADSAICVGAALIIIDSIITERDDKKKKAQENNNTAKE</sequence>
<protein>
    <recommendedName>
        <fullName evidence="1">Lipoprotein signal peptidase</fullName>
        <ecNumber evidence="1">3.4.23.36</ecNumber>
    </recommendedName>
    <alternativeName>
        <fullName evidence="1">Prolipoprotein signal peptidase</fullName>
    </alternativeName>
    <alternativeName>
        <fullName evidence="1">Signal peptidase II</fullName>
        <shortName evidence="1">SPase II</shortName>
    </alternativeName>
</protein>
<evidence type="ECO:0000255" key="1">
    <source>
        <dbReference type="HAMAP-Rule" id="MF_00161"/>
    </source>
</evidence>
<proteinExistence type="inferred from homology"/>
<reference key="1">
    <citation type="submission" date="2008-02" db="EMBL/GenBank/DDBJ databases">
        <title>Complete sequence of Shewanella woodyi ATCC 51908.</title>
        <authorList>
            <consortium name="US DOE Joint Genome Institute"/>
            <person name="Copeland A."/>
            <person name="Lucas S."/>
            <person name="Lapidus A."/>
            <person name="Glavina del Rio T."/>
            <person name="Dalin E."/>
            <person name="Tice H."/>
            <person name="Bruce D."/>
            <person name="Goodwin L."/>
            <person name="Pitluck S."/>
            <person name="Sims D."/>
            <person name="Brettin T."/>
            <person name="Detter J.C."/>
            <person name="Han C."/>
            <person name="Kuske C.R."/>
            <person name="Schmutz J."/>
            <person name="Larimer F."/>
            <person name="Land M."/>
            <person name="Hauser L."/>
            <person name="Kyrpides N."/>
            <person name="Lykidis A."/>
            <person name="Zhao J.-S."/>
            <person name="Richardson P."/>
        </authorList>
    </citation>
    <scope>NUCLEOTIDE SEQUENCE [LARGE SCALE GENOMIC DNA]</scope>
    <source>
        <strain>ATCC 51908 / MS32</strain>
    </source>
</reference>
<organism>
    <name type="scientific">Shewanella woodyi (strain ATCC 51908 / MS32)</name>
    <dbReference type="NCBI Taxonomy" id="392500"/>
    <lineage>
        <taxon>Bacteria</taxon>
        <taxon>Pseudomonadati</taxon>
        <taxon>Pseudomonadota</taxon>
        <taxon>Gammaproteobacteria</taxon>
        <taxon>Alteromonadales</taxon>
        <taxon>Shewanellaceae</taxon>
        <taxon>Shewanella</taxon>
    </lineage>
</organism>
<gene>
    <name evidence="1" type="primary">lspA</name>
    <name type="ordered locus">Swoo_1292</name>
</gene>
<comment type="function">
    <text evidence="1">This protein specifically catalyzes the removal of signal peptides from prolipoproteins.</text>
</comment>
<comment type="catalytic activity">
    <reaction evidence="1">
        <text>Release of signal peptides from bacterial membrane prolipoproteins. Hydrolyzes -Xaa-Yaa-Zaa-|-(S,diacylglyceryl)Cys-, in which Xaa is hydrophobic (preferably Leu), and Yaa (Ala or Ser) and Zaa (Gly or Ala) have small, neutral side chains.</text>
        <dbReference type="EC" id="3.4.23.36"/>
    </reaction>
</comment>
<comment type="pathway">
    <text evidence="1">Protein modification; lipoprotein biosynthesis (signal peptide cleavage).</text>
</comment>
<comment type="subcellular location">
    <subcellularLocation>
        <location evidence="1">Cell inner membrane</location>
        <topology evidence="1">Multi-pass membrane protein</topology>
    </subcellularLocation>
</comment>
<comment type="similarity">
    <text evidence="1">Belongs to the peptidase A8 family.</text>
</comment>
<keyword id="KW-0064">Aspartyl protease</keyword>
<keyword id="KW-0997">Cell inner membrane</keyword>
<keyword id="KW-1003">Cell membrane</keyword>
<keyword id="KW-0378">Hydrolase</keyword>
<keyword id="KW-0472">Membrane</keyword>
<keyword id="KW-0645">Protease</keyword>
<keyword id="KW-1185">Reference proteome</keyword>
<keyword id="KW-0812">Transmembrane</keyword>
<keyword id="KW-1133">Transmembrane helix</keyword>
<feature type="chain" id="PRO_1000097281" description="Lipoprotein signal peptidase">
    <location>
        <begin position="1"/>
        <end position="176"/>
    </location>
</feature>
<feature type="transmembrane region" description="Helical" evidence="1">
    <location>
        <begin position="12"/>
        <end position="32"/>
    </location>
</feature>
<feature type="transmembrane region" description="Helical" evidence="1">
    <location>
        <begin position="67"/>
        <end position="87"/>
    </location>
</feature>
<feature type="transmembrane region" description="Helical" evidence="1">
    <location>
        <begin position="94"/>
        <end position="116"/>
    </location>
</feature>
<feature type="transmembrane region" description="Helical" evidence="1">
    <location>
        <begin position="137"/>
        <end position="157"/>
    </location>
</feature>
<feature type="active site" evidence="1">
    <location>
        <position position="123"/>
    </location>
</feature>
<feature type="active site" evidence="1">
    <location>
        <position position="141"/>
    </location>
</feature>